<sequence length="132" mass="15636">MGFDVAGYLQSYSLKDWIRIIVYVGGYMLIRPYLMKLGAKIQEREHRKSLLEGEVDGTLDPEMTHGTKPKEHGEFDTDDEEEEENPDAEFRWGYSARRRIRKQREEYFKNQDKSPLDAYADDDEDIEEHLED</sequence>
<protein>
    <recommendedName>
        <fullName>PGA2-homolog C27.01c</fullName>
    </recommendedName>
</protein>
<name>PGA2_SCHPO</name>
<keyword id="KW-0256">Endoplasmic reticulum</keyword>
<keyword id="KW-0472">Membrane</keyword>
<keyword id="KW-0539">Nucleus</keyword>
<keyword id="KW-0597">Phosphoprotein</keyword>
<keyword id="KW-1185">Reference proteome</keyword>
<keyword id="KW-0812">Transmembrane</keyword>
<keyword id="KW-1133">Transmembrane helix</keyword>
<organism>
    <name type="scientific">Schizosaccharomyces pombe (strain 972 / ATCC 24843)</name>
    <name type="common">Fission yeast</name>
    <dbReference type="NCBI Taxonomy" id="284812"/>
    <lineage>
        <taxon>Eukaryota</taxon>
        <taxon>Fungi</taxon>
        <taxon>Dikarya</taxon>
        <taxon>Ascomycota</taxon>
        <taxon>Taphrinomycotina</taxon>
        <taxon>Schizosaccharomycetes</taxon>
        <taxon>Schizosaccharomycetales</taxon>
        <taxon>Schizosaccharomycetaceae</taxon>
        <taxon>Schizosaccharomyces</taxon>
    </lineage>
</organism>
<accession>Q9P6S6</accession>
<accession>P78948</accession>
<feature type="chain" id="PRO_0000116854" description="PGA2-homolog C27.01c">
    <location>
        <begin position="1"/>
        <end position="132"/>
    </location>
</feature>
<feature type="transmembrane region" description="Helical" evidence="2">
    <location>
        <begin position="17"/>
        <end position="34"/>
    </location>
</feature>
<feature type="region of interest" description="Disordered" evidence="3">
    <location>
        <begin position="50"/>
        <end position="90"/>
    </location>
</feature>
<feature type="region of interest" description="Disordered" evidence="3">
    <location>
        <begin position="106"/>
        <end position="132"/>
    </location>
</feature>
<feature type="compositionally biased region" description="Basic and acidic residues" evidence="3">
    <location>
        <begin position="62"/>
        <end position="75"/>
    </location>
</feature>
<feature type="compositionally biased region" description="Acidic residues" evidence="3">
    <location>
        <begin position="76"/>
        <end position="87"/>
    </location>
</feature>
<feature type="compositionally biased region" description="Basic and acidic residues" evidence="3">
    <location>
        <begin position="106"/>
        <end position="115"/>
    </location>
</feature>
<feature type="compositionally biased region" description="Acidic residues" evidence="3">
    <location>
        <begin position="119"/>
        <end position="132"/>
    </location>
</feature>
<feature type="modified residue" description="Phosphothreonine" evidence="5">
    <location>
        <position position="77"/>
    </location>
</feature>
<feature type="sequence conflict" description="In Ref. 1; BAA12198." evidence="6" ref="1">
    <original>E</original>
    <variation>D</variation>
    <location>
        <position position="80"/>
    </location>
</feature>
<gene>
    <name type="ORF">SPBC27.01c</name>
</gene>
<evidence type="ECO:0000250" key="1"/>
<evidence type="ECO:0000255" key="2"/>
<evidence type="ECO:0000256" key="3">
    <source>
        <dbReference type="SAM" id="MobiDB-lite"/>
    </source>
</evidence>
<evidence type="ECO:0000269" key="4">
    <source>
    </source>
</evidence>
<evidence type="ECO:0000269" key="5">
    <source>
    </source>
</evidence>
<evidence type="ECO:0000305" key="6"/>
<reference key="1">
    <citation type="submission" date="1996-03" db="EMBL/GenBank/DDBJ databases">
        <title>S.pombe chromosome II cosmid 1228 sequence.</title>
        <authorList>
            <person name="Kohnosu A."/>
            <person name="Niwa O."/>
            <person name="Yano M."/>
            <person name="Saitoh S."/>
            <person name="Katayama T."/>
            <person name="Nagao K."/>
            <person name="Yanagida M."/>
        </authorList>
    </citation>
    <scope>NUCLEOTIDE SEQUENCE [GENOMIC DNA]</scope>
    <source>
        <strain>972 / ATCC 24843</strain>
    </source>
</reference>
<reference key="2">
    <citation type="journal article" date="2002" name="Nature">
        <title>The genome sequence of Schizosaccharomyces pombe.</title>
        <authorList>
            <person name="Wood V."/>
            <person name="Gwilliam R."/>
            <person name="Rajandream M.A."/>
            <person name="Lyne M.H."/>
            <person name="Lyne R."/>
            <person name="Stewart A."/>
            <person name="Sgouros J.G."/>
            <person name="Peat N."/>
            <person name="Hayles J."/>
            <person name="Baker S.G."/>
            <person name="Basham D."/>
            <person name="Bowman S."/>
            <person name="Brooks K."/>
            <person name="Brown D."/>
            <person name="Brown S."/>
            <person name="Chillingworth T."/>
            <person name="Churcher C.M."/>
            <person name="Collins M."/>
            <person name="Connor R."/>
            <person name="Cronin A."/>
            <person name="Davis P."/>
            <person name="Feltwell T."/>
            <person name="Fraser A."/>
            <person name="Gentles S."/>
            <person name="Goble A."/>
            <person name="Hamlin N."/>
            <person name="Harris D.E."/>
            <person name="Hidalgo J."/>
            <person name="Hodgson G."/>
            <person name="Holroyd S."/>
            <person name="Hornsby T."/>
            <person name="Howarth S."/>
            <person name="Huckle E.J."/>
            <person name="Hunt S."/>
            <person name="Jagels K."/>
            <person name="James K.D."/>
            <person name="Jones L."/>
            <person name="Jones M."/>
            <person name="Leather S."/>
            <person name="McDonald S."/>
            <person name="McLean J."/>
            <person name="Mooney P."/>
            <person name="Moule S."/>
            <person name="Mungall K.L."/>
            <person name="Murphy L.D."/>
            <person name="Niblett D."/>
            <person name="Odell C."/>
            <person name="Oliver K."/>
            <person name="O'Neil S."/>
            <person name="Pearson D."/>
            <person name="Quail M.A."/>
            <person name="Rabbinowitsch E."/>
            <person name="Rutherford K.M."/>
            <person name="Rutter S."/>
            <person name="Saunders D."/>
            <person name="Seeger K."/>
            <person name="Sharp S."/>
            <person name="Skelton J."/>
            <person name="Simmonds M.N."/>
            <person name="Squares R."/>
            <person name="Squares S."/>
            <person name="Stevens K."/>
            <person name="Taylor K."/>
            <person name="Taylor R.G."/>
            <person name="Tivey A."/>
            <person name="Walsh S.V."/>
            <person name="Warren T."/>
            <person name="Whitehead S."/>
            <person name="Woodward J.R."/>
            <person name="Volckaert G."/>
            <person name="Aert R."/>
            <person name="Robben J."/>
            <person name="Grymonprez B."/>
            <person name="Weltjens I."/>
            <person name="Vanstreels E."/>
            <person name="Rieger M."/>
            <person name="Schaefer M."/>
            <person name="Mueller-Auer S."/>
            <person name="Gabel C."/>
            <person name="Fuchs M."/>
            <person name="Duesterhoeft A."/>
            <person name="Fritzc C."/>
            <person name="Holzer E."/>
            <person name="Moestl D."/>
            <person name="Hilbert H."/>
            <person name="Borzym K."/>
            <person name="Langer I."/>
            <person name="Beck A."/>
            <person name="Lehrach H."/>
            <person name="Reinhardt R."/>
            <person name="Pohl T.M."/>
            <person name="Eger P."/>
            <person name="Zimmermann W."/>
            <person name="Wedler H."/>
            <person name="Wambutt R."/>
            <person name="Purnelle B."/>
            <person name="Goffeau A."/>
            <person name="Cadieu E."/>
            <person name="Dreano S."/>
            <person name="Gloux S."/>
            <person name="Lelaure V."/>
            <person name="Mottier S."/>
            <person name="Galibert F."/>
            <person name="Aves S.J."/>
            <person name="Xiang Z."/>
            <person name="Hunt C."/>
            <person name="Moore K."/>
            <person name="Hurst S.M."/>
            <person name="Lucas M."/>
            <person name="Rochet M."/>
            <person name="Gaillardin C."/>
            <person name="Tallada V.A."/>
            <person name="Garzon A."/>
            <person name="Thode G."/>
            <person name="Daga R.R."/>
            <person name="Cruzado L."/>
            <person name="Jimenez J."/>
            <person name="Sanchez M."/>
            <person name="del Rey F."/>
            <person name="Benito J."/>
            <person name="Dominguez A."/>
            <person name="Revuelta J.L."/>
            <person name="Moreno S."/>
            <person name="Armstrong J."/>
            <person name="Forsburg S.L."/>
            <person name="Cerutti L."/>
            <person name="Lowe T."/>
            <person name="McCombie W.R."/>
            <person name="Paulsen I."/>
            <person name="Potashkin J."/>
            <person name="Shpakovski G.V."/>
            <person name="Ussery D."/>
            <person name="Barrell B.G."/>
            <person name="Nurse P."/>
        </authorList>
    </citation>
    <scope>NUCLEOTIDE SEQUENCE [LARGE SCALE GENOMIC DNA]</scope>
    <source>
        <strain>972 / ATCC 24843</strain>
    </source>
</reference>
<reference key="3">
    <citation type="journal article" date="2006" name="Nat. Biotechnol.">
        <title>ORFeome cloning and global analysis of protein localization in the fission yeast Schizosaccharomyces pombe.</title>
        <authorList>
            <person name="Matsuyama A."/>
            <person name="Arai R."/>
            <person name="Yashiroda Y."/>
            <person name="Shirai A."/>
            <person name="Kamata A."/>
            <person name="Sekido S."/>
            <person name="Kobayashi Y."/>
            <person name="Hashimoto A."/>
            <person name="Hamamoto M."/>
            <person name="Hiraoka Y."/>
            <person name="Horinouchi S."/>
            <person name="Yoshida M."/>
        </authorList>
    </citation>
    <scope>SUBCELLULAR LOCATION [LARGE SCALE ANALYSIS]</scope>
</reference>
<reference key="4">
    <citation type="journal article" date="2008" name="J. Proteome Res.">
        <title>Phosphoproteome analysis of fission yeast.</title>
        <authorList>
            <person name="Wilson-Grady J.T."/>
            <person name="Villen J."/>
            <person name="Gygi S.P."/>
        </authorList>
    </citation>
    <scope>PHOSPHORYLATION [LARGE SCALE ANALYSIS] AT THR-77</scope>
    <scope>IDENTIFICATION BY MASS SPECTROMETRY</scope>
</reference>
<proteinExistence type="evidence at protein level"/>
<comment type="function">
    <text evidence="1">Involved processing and trafficking glycosylated proteins.</text>
</comment>
<comment type="subcellular location">
    <subcellularLocation>
        <location evidence="4">Endoplasmic reticulum membrane</location>
        <topology evidence="4">Single-pass membrane protein</topology>
    </subcellularLocation>
    <subcellularLocation>
        <location evidence="1">Nucleus membrane</location>
        <topology evidence="1">Single-pass membrane protein</topology>
    </subcellularLocation>
</comment>
<comment type="similarity">
    <text evidence="6">Belongs to the PGA2 family.</text>
</comment>
<dbReference type="EMBL" id="D83993">
    <property type="protein sequence ID" value="BAA12198.1"/>
    <property type="molecule type" value="Genomic_DNA"/>
</dbReference>
<dbReference type="EMBL" id="CU329671">
    <property type="protein sequence ID" value="CAB89001.1"/>
    <property type="molecule type" value="Genomic_DNA"/>
</dbReference>
<dbReference type="BioGRID" id="277112">
    <property type="interactions" value="1"/>
</dbReference>
<dbReference type="FunCoup" id="Q9P6S6">
    <property type="interactions" value="29"/>
</dbReference>
<dbReference type="IntAct" id="Q9P6S6">
    <property type="interactions" value="1"/>
</dbReference>
<dbReference type="STRING" id="284812.Q9P6S6"/>
<dbReference type="iPTMnet" id="Q9P6S6"/>
<dbReference type="SwissPalm" id="Q9P6S6"/>
<dbReference type="PaxDb" id="4896-SPBC27.01c.1"/>
<dbReference type="EnsemblFungi" id="SPBC27.01c.1">
    <property type="protein sequence ID" value="SPBC27.01c.1:pep"/>
    <property type="gene ID" value="SPBC27.01c"/>
</dbReference>
<dbReference type="KEGG" id="spo:2540586"/>
<dbReference type="PomBase" id="SPBC27.01c"/>
<dbReference type="VEuPathDB" id="FungiDB:SPBC27.01c"/>
<dbReference type="eggNOG" id="ENOG502SFRQ">
    <property type="taxonomic scope" value="Eukaryota"/>
</dbReference>
<dbReference type="HOGENOM" id="CLU_121099_1_1_1"/>
<dbReference type="InParanoid" id="Q9P6S6"/>
<dbReference type="OMA" id="RWGYSAR"/>
<dbReference type="PRO" id="PR:Q9P6S6"/>
<dbReference type="Proteomes" id="UP000002485">
    <property type="component" value="Chromosome II"/>
</dbReference>
<dbReference type="GO" id="GO:0005783">
    <property type="term" value="C:endoplasmic reticulum"/>
    <property type="evidence" value="ECO:0007005"/>
    <property type="project" value="PomBase"/>
</dbReference>
<dbReference type="GO" id="GO:0005789">
    <property type="term" value="C:endoplasmic reticulum membrane"/>
    <property type="evidence" value="ECO:0000266"/>
    <property type="project" value="PomBase"/>
</dbReference>
<dbReference type="GO" id="GO:0031965">
    <property type="term" value="C:nuclear membrane"/>
    <property type="evidence" value="ECO:0007669"/>
    <property type="project" value="UniProtKB-SubCell"/>
</dbReference>
<dbReference type="GO" id="GO:0006886">
    <property type="term" value="P:intracellular protein transport"/>
    <property type="evidence" value="ECO:0000266"/>
    <property type="project" value="PomBase"/>
</dbReference>
<dbReference type="GO" id="GO:0015031">
    <property type="term" value="P:protein transport"/>
    <property type="evidence" value="ECO:0000318"/>
    <property type="project" value="GO_Central"/>
</dbReference>
<dbReference type="GO" id="GO:0016192">
    <property type="term" value="P:vesicle-mediated transport"/>
    <property type="evidence" value="ECO:0000305"/>
    <property type="project" value="PomBase"/>
</dbReference>
<dbReference type="InterPro" id="IPR011431">
    <property type="entry name" value="Trafficking_Pga2"/>
</dbReference>
<dbReference type="PANTHER" id="PTHR28199">
    <property type="entry name" value="PROCESSING OF GAS1 AND ALP PROTEIN 2"/>
    <property type="match status" value="1"/>
</dbReference>
<dbReference type="PANTHER" id="PTHR28199:SF1">
    <property type="entry name" value="PROCESSING OF GAS1 AND ALP PROTEIN 2"/>
    <property type="match status" value="1"/>
</dbReference>
<dbReference type="Pfam" id="PF07543">
    <property type="entry name" value="PGA2"/>
    <property type="match status" value="1"/>
</dbReference>
<dbReference type="PIRSF" id="PIRSF022909">
    <property type="entry name" value="UCP022909"/>
    <property type="match status" value="1"/>
</dbReference>